<accession>A3P0B7</accession>
<keyword id="KW-0687">Ribonucleoprotein</keyword>
<keyword id="KW-0689">Ribosomal protein</keyword>
<keyword id="KW-0694">RNA-binding</keyword>
<keyword id="KW-0699">rRNA-binding</keyword>
<keyword id="KW-0820">tRNA-binding</keyword>
<proteinExistence type="inferred from homology"/>
<reference key="1">
    <citation type="journal article" date="2010" name="Genome Biol. Evol.">
        <title>Continuing evolution of Burkholderia mallei through genome reduction and large-scale rearrangements.</title>
        <authorList>
            <person name="Losada L."/>
            <person name="Ronning C.M."/>
            <person name="DeShazer D."/>
            <person name="Woods D."/>
            <person name="Fedorova N."/>
            <person name="Kim H.S."/>
            <person name="Shabalina S.A."/>
            <person name="Pearson T.R."/>
            <person name="Brinkac L."/>
            <person name="Tan P."/>
            <person name="Nandi T."/>
            <person name="Crabtree J."/>
            <person name="Badger J."/>
            <person name="Beckstrom-Sternberg S."/>
            <person name="Saqib M."/>
            <person name="Schutzer S.E."/>
            <person name="Keim P."/>
            <person name="Nierman W.C."/>
        </authorList>
    </citation>
    <scope>NUCLEOTIDE SEQUENCE [LARGE SCALE GENOMIC DNA]</scope>
    <source>
        <strain>1106a</strain>
    </source>
</reference>
<protein>
    <recommendedName>
        <fullName evidence="1">Small ribosomal subunit protein uS7</fullName>
    </recommendedName>
    <alternativeName>
        <fullName evidence="2">30S ribosomal protein S7</fullName>
    </alternativeName>
</protein>
<dbReference type="EMBL" id="CP000572">
    <property type="protein sequence ID" value="ABN88632.1"/>
    <property type="molecule type" value="Genomic_DNA"/>
</dbReference>
<dbReference type="RefSeq" id="WP_004198359.1">
    <property type="nucleotide sequence ID" value="NC_009076.1"/>
</dbReference>
<dbReference type="SMR" id="A3P0B7"/>
<dbReference type="GeneID" id="93171021"/>
<dbReference type="KEGG" id="bpl:BURPS1106A_3808"/>
<dbReference type="HOGENOM" id="CLU_072226_1_1_4"/>
<dbReference type="Proteomes" id="UP000006738">
    <property type="component" value="Chromosome I"/>
</dbReference>
<dbReference type="GO" id="GO:0015935">
    <property type="term" value="C:small ribosomal subunit"/>
    <property type="evidence" value="ECO:0007669"/>
    <property type="project" value="InterPro"/>
</dbReference>
<dbReference type="GO" id="GO:0019843">
    <property type="term" value="F:rRNA binding"/>
    <property type="evidence" value="ECO:0007669"/>
    <property type="project" value="UniProtKB-UniRule"/>
</dbReference>
<dbReference type="GO" id="GO:0003735">
    <property type="term" value="F:structural constituent of ribosome"/>
    <property type="evidence" value="ECO:0007669"/>
    <property type="project" value="InterPro"/>
</dbReference>
<dbReference type="GO" id="GO:0000049">
    <property type="term" value="F:tRNA binding"/>
    <property type="evidence" value="ECO:0007669"/>
    <property type="project" value="UniProtKB-UniRule"/>
</dbReference>
<dbReference type="GO" id="GO:0006412">
    <property type="term" value="P:translation"/>
    <property type="evidence" value="ECO:0007669"/>
    <property type="project" value="UniProtKB-UniRule"/>
</dbReference>
<dbReference type="CDD" id="cd14869">
    <property type="entry name" value="uS7_Bacteria"/>
    <property type="match status" value="1"/>
</dbReference>
<dbReference type="FunFam" id="1.10.455.10:FF:000001">
    <property type="entry name" value="30S ribosomal protein S7"/>
    <property type="match status" value="1"/>
</dbReference>
<dbReference type="Gene3D" id="1.10.455.10">
    <property type="entry name" value="Ribosomal protein S7 domain"/>
    <property type="match status" value="1"/>
</dbReference>
<dbReference type="HAMAP" id="MF_00480_B">
    <property type="entry name" value="Ribosomal_uS7_B"/>
    <property type="match status" value="1"/>
</dbReference>
<dbReference type="InterPro" id="IPR000235">
    <property type="entry name" value="Ribosomal_uS7"/>
</dbReference>
<dbReference type="InterPro" id="IPR005717">
    <property type="entry name" value="Ribosomal_uS7_bac/org-type"/>
</dbReference>
<dbReference type="InterPro" id="IPR020606">
    <property type="entry name" value="Ribosomal_uS7_CS"/>
</dbReference>
<dbReference type="InterPro" id="IPR023798">
    <property type="entry name" value="Ribosomal_uS7_dom"/>
</dbReference>
<dbReference type="InterPro" id="IPR036823">
    <property type="entry name" value="Ribosomal_uS7_dom_sf"/>
</dbReference>
<dbReference type="NCBIfam" id="TIGR01029">
    <property type="entry name" value="rpsG_bact"/>
    <property type="match status" value="1"/>
</dbReference>
<dbReference type="PANTHER" id="PTHR11205">
    <property type="entry name" value="RIBOSOMAL PROTEIN S7"/>
    <property type="match status" value="1"/>
</dbReference>
<dbReference type="Pfam" id="PF00177">
    <property type="entry name" value="Ribosomal_S7"/>
    <property type="match status" value="1"/>
</dbReference>
<dbReference type="PIRSF" id="PIRSF002122">
    <property type="entry name" value="RPS7p_RPS7a_RPS5e_RPS7o"/>
    <property type="match status" value="1"/>
</dbReference>
<dbReference type="SUPFAM" id="SSF47973">
    <property type="entry name" value="Ribosomal protein S7"/>
    <property type="match status" value="1"/>
</dbReference>
<dbReference type="PROSITE" id="PS00052">
    <property type="entry name" value="RIBOSOMAL_S7"/>
    <property type="match status" value="1"/>
</dbReference>
<organism>
    <name type="scientific">Burkholderia pseudomallei (strain 1106a)</name>
    <dbReference type="NCBI Taxonomy" id="357348"/>
    <lineage>
        <taxon>Bacteria</taxon>
        <taxon>Pseudomonadati</taxon>
        <taxon>Pseudomonadota</taxon>
        <taxon>Betaproteobacteria</taxon>
        <taxon>Burkholderiales</taxon>
        <taxon>Burkholderiaceae</taxon>
        <taxon>Burkholderia</taxon>
        <taxon>pseudomallei group</taxon>
    </lineage>
</organism>
<sequence length="156" mass="17686">MPRRREVPKREVLPDPKYGNVDVAKFMNMLMLSGKKSVAERIVYGAFEQIQTKGGKDPLEVFTVALNNVKPVVEVKSRRVGGANYQVPVEVRPSRRMALAMRWLREAAKKRSEKSMALRLAGELSEAAEGRGGAMKKRDEVHRMAEANRAFSHFRF</sequence>
<comment type="function">
    <text evidence="1">One of the primary rRNA binding proteins, it binds directly to 16S rRNA where it nucleates assembly of the head domain of the 30S subunit. Is located at the subunit interface close to the decoding center, probably blocks exit of the E-site tRNA.</text>
</comment>
<comment type="subunit">
    <text evidence="1">Part of the 30S ribosomal subunit. Contacts proteins S9 and S11.</text>
</comment>
<comment type="similarity">
    <text evidence="1">Belongs to the universal ribosomal protein uS7 family.</text>
</comment>
<name>RS7_BURP0</name>
<feature type="chain" id="PRO_1000014160" description="Small ribosomal subunit protein uS7">
    <location>
        <begin position="1"/>
        <end position="156"/>
    </location>
</feature>
<gene>
    <name evidence="1" type="primary">rpsG</name>
    <name type="ordered locus">BURPS1106A_3808</name>
</gene>
<evidence type="ECO:0000255" key="1">
    <source>
        <dbReference type="HAMAP-Rule" id="MF_00480"/>
    </source>
</evidence>
<evidence type="ECO:0000305" key="2"/>